<protein>
    <recommendedName>
        <fullName>Ubiquitin-conjugating enzyme E2 2</fullName>
        <ecNumber>2.3.2.23</ecNumber>
    </recommendedName>
    <alternativeName>
        <fullName>E2 ubiquitin-conjugating enzyme 2</fullName>
    </alternativeName>
    <alternativeName>
        <fullName>Ubiquitin carrier protein UBC2</fullName>
    </alternativeName>
    <alternativeName>
        <fullName>Ubiquitin-protein ligase UBC2</fullName>
    </alternativeName>
</protein>
<keyword id="KW-0067">ATP-binding</keyword>
<keyword id="KW-0156">Chromatin regulator</keyword>
<keyword id="KW-0963">Cytoplasm</keyword>
<keyword id="KW-0227">DNA damage</keyword>
<keyword id="KW-0234">DNA repair</keyword>
<keyword id="KW-0547">Nucleotide-binding</keyword>
<keyword id="KW-0539">Nucleus</keyword>
<keyword id="KW-0749">Sporulation</keyword>
<keyword id="KW-0804">Transcription</keyword>
<keyword id="KW-0805">Transcription regulation</keyword>
<keyword id="KW-0808">Transferase</keyword>
<keyword id="KW-0833">Ubl conjugation pathway</keyword>
<organism>
    <name type="scientific">Cryptococcus neoformans var. neoformans serotype D (strain B-3501A)</name>
    <name type="common">Filobasidiella neoformans</name>
    <dbReference type="NCBI Taxonomy" id="283643"/>
    <lineage>
        <taxon>Eukaryota</taxon>
        <taxon>Fungi</taxon>
        <taxon>Dikarya</taxon>
        <taxon>Basidiomycota</taxon>
        <taxon>Agaricomycotina</taxon>
        <taxon>Tremellomycetes</taxon>
        <taxon>Tremellales</taxon>
        <taxon>Cryptococcaceae</taxon>
        <taxon>Cryptococcus</taxon>
        <taxon>Cryptococcus neoformans species complex</taxon>
    </lineage>
</organism>
<gene>
    <name type="primary">UBC2</name>
    <name type="ordered locus">CNBA7840</name>
</gene>
<feature type="chain" id="PRO_0000410321" description="Ubiquitin-conjugating enzyme E2 2">
    <location>
        <begin position="1"/>
        <end position="169"/>
    </location>
</feature>
<feature type="domain" description="UBC core" evidence="2">
    <location>
        <begin position="4"/>
        <end position="150"/>
    </location>
</feature>
<feature type="active site" description="Glycyl thioester intermediate" evidence="2 3">
    <location>
        <position position="88"/>
    </location>
</feature>
<proteinExistence type="inferred from homology"/>
<sequence>MSTAAKRRLIRDFKRLTSDAPIGISGSPNPDNIMVWNAVIFGPPETPFEDGSFRLTLTFTDAYPNKPPTVRFISKMFHPNIYANGELCLDILQNRWSPTYDVAAILTSVQSLLNDPNPASPANVDAAQLFKENLKEYERRVKKTVELSWVDNADEIEAEVVEADEGSSS</sequence>
<reference key="1">
    <citation type="journal article" date="2005" name="Science">
        <title>The genome of the basidiomycetous yeast and human pathogen Cryptococcus neoformans.</title>
        <authorList>
            <person name="Loftus B.J."/>
            <person name="Fung E."/>
            <person name="Roncaglia P."/>
            <person name="Rowley D."/>
            <person name="Amedeo P."/>
            <person name="Bruno D."/>
            <person name="Vamathevan J."/>
            <person name="Miranda M."/>
            <person name="Anderson I.J."/>
            <person name="Fraser J.A."/>
            <person name="Allen J.E."/>
            <person name="Bosdet I.E."/>
            <person name="Brent M.R."/>
            <person name="Chiu R."/>
            <person name="Doering T.L."/>
            <person name="Donlin M.J."/>
            <person name="D'Souza C.A."/>
            <person name="Fox D.S."/>
            <person name="Grinberg V."/>
            <person name="Fu J."/>
            <person name="Fukushima M."/>
            <person name="Haas B.J."/>
            <person name="Huang J.C."/>
            <person name="Janbon G."/>
            <person name="Jones S.J.M."/>
            <person name="Koo H.L."/>
            <person name="Krzywinski M.I."/>
            <person name="Kwon-Chung K.J."/>
            <person name="Lengeler K.B."/>
            <person name="Maiti R."/>
            <person name="Marra M.A."/>
            <person name="Marra R.E."/>
            <person name="Mathewson C.A."/>
            <person name="Mitchell T.G."/>
            <person name="Pertea M."/>
            <person name="Riggs F.R."/>
            <person name="Salzberg S.L."/>
            <person name="Schein J.E."/>
            <person name="Shvartsbeyn A."/>
            <person name="Shin H."/>
            <person name="Shumway M."/>
            <person name="Specht C.A."/>
            <person name="Suh B.B."/>
            <person name="Tenney A."/>
            <person name="Utterback T.R."/>
            <person name="Wickes B.L."/>
            <person name="Wortman J.R."/>
            <person name="Wye N.H."/>
            <person name="Kronstad J.W."/>
            <person name="Lodge J.K."/>
            <person name="Heitman J."/>
            <person name="Davis R.W."/>
            <person name="Fraser C.M."/>
            <person name="Hyman R.W."/>
        </authorList>
    </citation>
    <scope>NUCLEOTIDE SEQUENCE [LARGE SCALE GENOMIC DNA]</scope>
    <source>
        <strain>B-3501A</strain>
    </source>
</reference>
<evidence type="ECO:0000250" key="1">
    <source>
        <dbReference type="UniProtKB" id="Q5VVX9"/>
    </source>
</evidence>
<evidence type="ECO:0000255" key="2">
    <source>
        <dbReference type="PROSITE-ProRule" id="PRU00388"/>
    </source>
</evidence>
<evidence type="ECO:0000255" key="3">
    <source>
        <dbReference type="PROSITE-ProRule" id="PRU10133"/>
    </source>
</evidence>
<comment type="function">
    <text evidence="2">Catalyzes the covalent attachment of ubiquitin to other proteins. Plays a role in transcription regulation by catalyzing the monoubiquitination of histone H2B to form H2BK123ub1. H2BK123ub1 gives a specific tag for epigenetic transcriptional activation and is also a prerequisite for H3K4me and H3K79me formation. Also involved in postreplication repair of UV-damaged DNA, in N-end rule-dependent protein degradation and in sporulation.</text>
</comment>
<comment type="catalytic activity">
    <reaction evidence="2 3">
        <text>S-ubiquitinyl-[E1 ubiquitin-activating enzyme]-L-cysteine + [E2 ubiquitin-conjugating enzyme]-L-cysteine = [E1 ubiquitin-activating enzyme]-L-cysteine + S-ubiquitinyl-[E2 ubiquitin-conjugating enzyme]-L-cysteine.</text>
        <dbReference type="EC" id="2.3.2.23"/>
    </reaction>
</comment>
<comment type="pathway">
    <text evidence="2">Protein modification; protein ubiquitination.</text>
</comment>
<comment type="subcellular location">
    <subcellularLocation>
        <location evidence="1">Cytoplasm</location>
    </subcellularLocation>
    <subcellularLocation>
        <location evidence="1">Nucleus</location>
    </subcellularLocation>
</comment>
<comment type="similarity">
    <text evidence="2">Belongs to the ubiquitin-conjugating enzyme family.</text>
</comment>
<accession>P0CS17</accession>
<accession>Q55YQ1</accession>
<accession>Q5KN22</accession>
<name>UBC2_CRYNB</name>
<dbReference type="EC" id="2.3.2.23"/>
<dbReference type="EMBL" id="AAEY01000005">
    <property type="protein sequence ID" value="EAL23017.1"/>
    <property type="molecule type" value="Genomic_DNA"/>
</dbReference>
<dbReference type="RefSeq" id="XP_777664.1">
    <property type="nucleotide sequence ID" value="XM_772571.1"/>
</dbReference>
<dbReference type="SMR" id="P0CS17"/>
<dbReference type="EnsemblFungi" id="AAW41362">
    <property type="protein sequence ID" value="AAW41362"/>
    <property type="gene ID" value="CNA08010"/>
</dbReference>
<dbReference type="GeneID" id="4934050"/>
<dbReference type="KEGG" id="cnb:CNBA7840"/>
<dbReference type="VEuPathDB" id="FungiDB:CNBA7840"/>
<dbReference type="HOGENOM" id="CLU_030988_10_2_1"/>
<dbReference type="UniPathway" id="UPA00143"/>
<dbReference type="GO" id="GO:0000781">
    <property type="term" value="C:chromosome, telomeric region"/>
    <property type="evidence" value="ECO:0007669"/>
    <property type="project" value="GOC"/>
</dbReference>
<dbReference type="GO" id="GO:0005737">
    <property type="term" value="C:cytoplasm"/>
    <property type="evidence" value="ECO:0007669"/>
    <property type="project" value="UniProtKB-SubCell"/>
</dbReference>
<dbReference type="GO" id="GO:0033503">
    <property type="term" value="C:HULC complex"/>
    <property type="evidence" value="ECO:0007669"/>
    <property type="project" value="EnsemblFungi"/>
</dbReference>
<dbReference type="GO" id="GO:1990304">
    <property type="term" value="C:MUB1-RAD6-UBR2 ubiquitin ligase complex"/>
    <property type="evidence" value="ECO:0007669"/>
    <property type="project" value="EnsemblFungi"/>
</dbReference>
<dbReference type="GO" id="GO:0005634">
    <property type="term" value="C:nucleus"/>
    <property type="evidence" value="ECO:0007669"/>
    <property type="project" value="UniProtKB-SubCell"/>
</dbReference>
<dbReference type="GO" id="GO:0097505">
    <property type="term" value="C:Rad6-Rad18 complex"/>
    <property type="evidence" value="ECO:0007669"/>
    <property type="project" value="EnsemblFungi"/>
</dbReference>
<dbReference type="GO" id="GO:1990305">
    <property type="term" value="C:RAD6-UBR2 ubiquitin ligase complex"/>
    <property type="evidence" value="ECO:0007669"/>
    <property type="project" value="EnsemblFungi"/>
</dbReference>
<dbReference type="GO" id="GO:1990303">
    <property type="term" value="C:UBR1-RAD6 ubiquitin ligase complex"/>
    <property type="evidence" value="ECO:0007669"/>
    <property type="project" value="EnsemblFungi"/>
</dbReference>
<dbReference type="GO" id="GO:0005524">
    <property type="term" value="F:ATP binding"/>
    <property type="evidence" value="ECO:0007669"/>
    <property type="project" value="UniProtKB-KW"/>
</dbReference>
<dbReference type="GO" id="GO:0070628">
    <property type="term" value="F:proteasome binding"/>
    <property type="evidence" value="ECO:0007669"/>
    <property type="project" value="EnsemblFungi"/>
</dbReference>
<dbReference type="GO" id="GO:0003697">
    <property type="term" value="F:single-stranded DNA binding"/>
    <property type="evidence" value="ECO:0007669"/>
    <property type="project" value="EnsemblFungi"/>
</dbReference>
<dbReference type="GO" id="GO:0017116">
    <property type="term" value="F:single-stranded DNA helicase activity"/>
    <property type="evidence" value="ECO:0007669"/>
    <property type="project" value="EnsemblFungi"/>
</dbReference>
<dbReference type="GO" id="GO:0061631">
    <property type="term" value="F:ubiquitin conjugating enzyme activity"/>
    <property type="evidence" value="ECO:0007669"/>
    <property type="project" value="UniProtKB-EC"/>
</dbReference>
<dbReference type="GO" id="GO:0034620">
    <property type="term" value="P:cellular response to unfolded protein"/>
    <property type="evidence" value="ECO:0007669"/>
    <property type="project" value="EnsemblFungi"/>
</dbReference>
<dbReference type="GO" id="GO:0071629">
    <property type="term" value="P:cytoplasm protein quality control by the ubiquitin-proteasome system"/>
    <property type="evidence" value="ECO:0007669"/>
    <property type="project" value="EnsemblFungi"/>
</dbReference>
<dbReference type="GO" id="GO:0006353">
    <property type="term" value="P:DNA-templated transcription termination"/>
    <property type="evidence" value="ECO:0007669"/>
    <property type="project" value="EnsemblFungi"/>
</dbReference>
<dbReference type="GO" id="GO:0000724">
    <property type="term" value="P:double-strand break repair via homologous recombination"/>
    <property type="evidence" value="ECO:0007669"/>
    <property type="project" value="EnsemblFungi"/>
</dbReference>
<dbReference type="GO" id="GO:0036503">
    <property type="term" value="P:ERAD pathway"/>
    <property type="evidence" value="ECO:0007669"/>
    <property type="project" value="EnsemblFungi"/>
</dbReference>
<dbReference type="GO" id="GO:0042275">
    <property type="term" value="P:error-free postreplication DNA repair"/>
    <property type="evidence" value="ECO:0007669"/>
    <property type="project" value="EnsemblFungi"/>
</dbReference>
<dbReference type="GO" id="GO:0070987">
    <property type="term" value="P:error-free translesion synthesis"/>
    <property type="evidence" value="ECO:0007669"/>
    <property type="project" value="EnsemblFungi"/>
</dbReference>
<dbReference type="GO" id="GO:0042276">
    <property type="term" value="P:error-prone translesion synthesis"/>
    <property type="evidence" value="ECO:0007669"/>
    <property type="project" value="EnsemblFungi"/>
</dbReference>
<dbReference type="GO" id="GO:0042138">
    <property type="term" value="P:meiotic DNA double-strand break formation"/>
    <property type="evidence" value="ECO:0007669"/>
    <property type="project" value="EnsemblFungi"/>
</dbReference>
<dbReference type="GO" id="GO:0031571">
    <property type="term" value="P:mitotic G1 DNA damage checkpoint signaling"/>
    <property type="evidence" value="ECO:0007669"/>
    <property type="project" value="EnsemblFungi"/>
</dbReference>
<dbReference type="GO" id="GO:2000639">
    <property type="term" value="P:negative regulation of SREBP signaling pathway"/>
    <property type="evidence" value="ECO:0007669"/>
    <property type="project" value="EnsemblFungi"/>
</dbReference>
<dbReference type="GO" id="GO:0016567">
    <property type="term" value="P:protein ubiquitination"/>
    <property type="evidence" value="ECO:0007669"/>
    <property type="project" value="UniProtKB-UniPathway"/>
</dbReference>
<dbReference type="GO" id="GO:0090089">
    <property type="term" value="P:regulation of dipeptide transport"/>
    <property type="evidence" value="ECO:0007669"/>
    <property type="project" value="EnsemblFungi"/>
</dbReference>
<dbReference type="GO" id="GO:0009302">
    <property type="term" value="P:sno(s)RNA transcription"/>
    <property type="evidence" value="ECO:0007669"/>
    <property type="project" value="EnsemblFungi"/>
</dbReference>
<dbReference type="GO" id="GO:0030435">
    <property type="term" value="P:sporulation resulting in formation of a cellular spore"/>
    <property type="evidence" value="ECO:0007669"/>
    <property type="project" value="UniProtKB-KW"/>
</dbReference>
<dbReference type="GO" id="GO:0120174">
    <property type="term" value="P:stress-induced homeostatically regulated protein degradation pathway"/>
    <property type="evidence" value="ECO:0007669"/>
    <property type="project" value="EnsemblFungi"/>
</dbReference>
<dbReference type="GO" id="GO:0031509">
    <property type="term" value="P:subtelomeric heterochromatin formation"/>
    <property type="evidence" value="ECO:0007669"/>
    <property type="project" value="EnsemblFungi"/>
</dbReference>
<dbReference type="GO" id="GO:0000722">
    <property type="term" value="P:telomere maintenance via recombination"/>
    <property type="evidence" value="ECO:0007669"/>
    <property type="project" value="EnsemblFungi"/>
</dbReference>
<dbReference type="GO" id="GO:0006366">
    <property type="term" value="P:transcription by RNA polymerase II"/>
    <property type="evidence" value="ECO:0007669"/>
    <property type="project" value="EnsemblFungi"/>
</dbReference>
<dbReference type="GO" id="GO:0071596">
    <property type="term" value="P:ubiquitin-dependent protein catabolic process via the N-end rule pathway"/>
    <property type="evidence" value="ECO:0007669"/>
    <property type="project" value="EnsemblFungi"/>
</dbReference>
<dbReference type="CDD" id="cd23790">
    <property type="entry name" value="UBCc_UBE2A_2B"/>
    <property type="match status" value="1"/>
</dbReference>
<dbReference type="FunFam" id="3.10.110.10:FF:000007">
    <property type="entry name" value="Ubiquitin-conjugating enzyme E2 2"/>
    <property type="match status" value="1"/>
</dbReference>
<dbReference type="Gene3D" id="3.10.110.10">
    <property type="entry name" value="Ubiquitin Conjugating Enzyme"/>
    <property type="match status" value="1"/>
</dbReference>
<dbReference type="InterPro" id="IPR050113">
    <property type="entry name" value="Ub_conjugating_enzyme"/>
</dbReference>
<dbReference type="InterPro" id="IPR000608">
    <property type="entry name" value="UBQ-conjugat_E2_core"/>
</dbReference>
<dbReference type="InterPro" id="IPR023313">
    <property type="entry name" value="UBQ-conjugating_AS"/>
</dbReference>
<dbReference type="InterPro" id="IPR016135">
    <property type="entry name" value="UBQ-conjugating_enzyme/RWD"/>
</dbReference>
<dbReference type="PANTHER" id="PTHR24067">
    <property type="entry name" value="UBIQUITIN-CONJUGATING ENZYME E2"/>
    <property type="match status" value="1"/>
</dbReference>
<dbReference type="Pfam" id="PF00179">
    <property type="entry name" value="UQ_con"/>
    <property type="match status" value="1"/>
</dbReference>
<dbReference type="SMART" id="SM00212">
    <property type="entry name" value="UBCc"/>
    <property type="match status" value="1"/>
</dbReference>
<dbReference type="SUPFAM" id="SSF54495">
    <property type="entry name" value="UBC-like"/>
    <property type="match status" value="1"/>
</dbReference>
<dbReference type="PROSITE" id="PS00183">
    <property type="entry name" value="UBC_1"/>
    <property type="match status" value="1"/>
</dbReference>
<dbReference type="PROSITE" id="PS50127">
    <property type="entry name" value="UBC_2"/>
    <property type="match status" value="1"/>
</dbReference>